<keyword id="KW-0067">ATP-binding</keyword>
<keyword id="KW-1003">Cell membrane</keyword>
<keyword id="KW-0963">Cytoplasm</keyword>
<keyword id="KW-0472">Membrane</keyword>
<keyword id="KW-0479">Metal-binding</keyword>
<keyword id="KW-0547">Nucleotide-binding</keyword>
<keyword id="KW-0653">Protein transport</keyword>
<keyword id="KW-1278">Translocase</keyword>
<keyword id="KW-0811">Translocation</keyword>
<keyword id="KW-0813">Transport</keyword>
<keyword id="KW-0862">Zinc</keyword>
<reference key="1">
    <citation type="journal article" date="2007" name="PLoS ONE">
        <title>Analysis of the neurotoxin complex genes in Clostridium botulinum A1-A4 and B1 strains: BoNT/A3, /Ba4 and /B1 clusters are located within plasmids.</title>
        <authorList>
            <person name="Smith T.J."/>
            <person name="Hill K.K."/>
            <person name="Foley B.T."/>
            <person name="Detter J.C."/>
            <person name="Munk A.C."/>
            <person name="Bruce D.C."/>
            <person name="Doggett N.A."/>
            <person name="Smith L.A."/>
            <person name="Marks J.D."/>
            <person name="Xie G."/>
            <person name="Brettin T.S."/>
        </authorList>
    </citation>
    <scope>NUCLEOTIDE SEQUENCE [LARGE SCALE GENOMIC DNA]</scope>
    <source>
        <strain>ATCC 19397 / Type A</strain>
    </source>
</reference>
<gene>
    <name evidence="1" type="primary">secA</name>
    <name type="ordered locus">CLB_0213</name>
</gene>
<sequence length="835" mass="95608">MGILNKIFGTYSERELRRVNPIVNKIEALDEKMQSLKDEDFKLKTEEFKSRLEKGEKLDDILPEAFALVREAAHRTIGLKHYREQLIGGVVLHQGRIGEMKTGEGKTLVATLPAYVNALTGKGVHIVTVNDYLAKRDRDLMAPVYEFLGLKVGVILHNLNNEERQEAYGSDITYGTNSEFGFDYLRDNMVVYKEERVQRKLNFSIVDEVDSILIDEARTPLIISGQGEKSTEFYKVADYFTKSLIAEKDFTIDEKANSAMLTDEGVNKAENFFKVDNYADAENMEIQHHVVQALKANYVMKKDKDYMIKDGEILIVDEFTGRAMEGRRYSDGLHQAIEAKEGVRVERESKTLATITYQNYFRMYNKLSGMTGTAQTEENEFREIYGLDVIVIPTHEPIARIDNADVVYKSEKGKFKAIVDEIVERYKKGQPMLVGTVSIEKSEMLSSMLKKKGVPHQVLNAKYHEKEAEIISHAGEYGMVTIATNMAGRGTDIKLTKEAEEAGGLMIIGTERHESRRIDNQLRGRSGRQGDPGESRFFVSLEDDLMRIFGSERIQGIVDKLGLAEDEAIESKMVSSAIESAQKKVEGNNFDIRKTLLQYDDVINKQREIIYKQRSEVLEGEDLKDQIRDMIRDVVYTAVNSHISGVEEEFQTELQNLVNYLEDICLPKALVKVKDISNLSDEEIKEKLLEAVENIYIRKEKEIGEEQIREIERVILLRVVDTKWMDHIDDMDHLKQGIGLRAYRQQDPVQAYQFEGSEMFEEMIYNIKVDTVRYLFHVEVEKAPEREKVAKETSTNYDEDSVKKQPIKKENRIGRNDMCPCGSGKKYKNCCGRMA</sequence>
<feature type="chain" id="PRO_0000320776" description="Protein translocase subunit SecA">
    <location>
        <begin position="1"/>
        <end position="835"/>
    </location>
</feature>
<feature type="binding site" evidence="1">
    <location>
        <position position="85"/>
    </location>
    <ligand>
        <name>ATP</name>
        <dbReference type="ChEBI" id="CHEBI:30616"/>
    </ligand>
</feature>
<feature type="binding site" evidence="1">
    <location>
        <begin position="103"/>
        <end position="107"/>
    </location>
    <ligand>
        <name>ATP</name>
        <dbReference type="ChEBI" id="CHEBI:30616"/>
    </ligand>
</feature>
<feature type="binding site" evidence="1">
    <location>
        <position position="492"/>
    </location>
    <ligand>
        <name>ATP</name>
        <dbReference type="ChEBI" id="CHEBI:30616"/>
    </ligand>
</feature>
<feature type="binding site" evidence="1">
    <location>
        <position position="819"/>
    </location>
    <ligand>
        <name>Zn(2+)</name>
        <dbReference type="ChEBI" id="CHEBI:29105"/>
    </ligand>
</feature>
<feature type="binding site" evidence="1">
    <location>
        <position position="821"/>
    </location>
    <ligand>
        <name>Zn(2+)</name>
        <dbReference type="ChEBI" id="CHEBI:29105"/>
    </ligand>
</feature>
<feature type="binding site" evidence="1">
    <location>
        <position position="830"/>
    </location>
    <ligand>
        <name>Zn(2+)</name>
        <dbReference type="ChEBI" id="CHEBI:29105"/>
    </ligand>
</feature>
<feature type="binding site" evidence="1">
    <location>
        <position position="831"/>
    </location>
    <ligand>
        <name>Zn(2+)</name>
        <dbReference type="ChEBI" id="CHEBI:29105"/>
    </ligand>
</feature>
<name>SECA_CLOB1</name>
<comment type="function">
    <text evidence="1">Part of the Sec protein translocase complex. Interacts with the SecYEG preprotein conducting channel. Has a central role in coupling the hydrolysis of ATP to the transfer of proteins into and across the cell membrane, serving as an ATP-driven molecular motor driving the stepwise translocation of polypeptide chains across the membrane.</text>
</comment>
<comment type="catalytic activity">
    <reaction evidence="1">
        <text>ATP + H2O + cellular proteinSide 1 = ADP + phosphate + cellular proteinSide 2.</text>
        <dbReference type="EC" id="7.4.2.8"/>
    </reaction>
</comment>
<comment type="cofactor">
    <cofactor evidence="1">
        <name>Zn(2+)</name>
        <dbReference type="ChEBI" id="CHEBI:29105"/>
    </cofactor>
    <text evidence="1">May bind 1 zinc ion per subunit.</text>
</comment>
<comment type="subunit">
    <text evidence="1">Monomer and homodimer. Part of the essential Sec protein translocation apparatus which comprises SecA, SecYEG and auxiliary proteins SecDF. Other proteins may also be involved.</text>
</comment>
<comment type="subcellular location">
    <subcellularLocation>
        <location evidence="1">Cell membrane</location>
        <topology evidence="1">Peripheral membrane protein</topology>
        <orientation evidence="1">Cytoplasmic side</orientation>
    </subcellularLocation>
    <subcellularLocation>
        <location evidence="1">Cytoplasm</location>
    </subcellularLocation>
    <text evidence="1">Distribution is 50-50.</text>
</comment>
<comment type="similarity">
    <text evidence="1">Belongs to the SecA family.</text>
</comment>
<evidence type="ECO:0000255" key="1">
    <source>
        <dbReference type="HAMAP-Rule" id="MF_01382"/>
    </source>
</evidence>
<proteinExistence type="inferred from homology"/>
<dbReference type="EC" id="7.4.2.8" evidence="1"/>
<dbReference type="EMBL" id="CP000726">
    <property type="protein sequence ID" value="ABS33241.1"/>
    <property type="molecule type" value="Genomic_DNA"/>
</dbReference>
<dbReference type="RefSeq" id="WP_011947996.1">
    <property type="nucleotide sequence ID" value="NC_009697.1"/>
</dbReference>
<dbReference type="SMR" id="A7FQJ3"/>
<dbReference type="GeneID" id="5184428"/>
<dbReference type="KEGG" id="cba:CLB_0213"/>
<dbReference type="HOGENOM" id="CLU_005314_3_0_9"/>
<dbReference type="GO" id="GO:0031522">
    <property type="term" value="C:cell envelope Sec protein transport complex"/>
    <property type="evidence" value="ECO:0007669"/>
    <property type="project" value="TreeGrafter"/>
</dbReference>
<dbReference type="GO" id="GO:0005829">
    <property type="term" value="C:cytosol"/>
    <property type="evidence" value="ECO:0007669"/>
    <property type="project" value="TreeGrafter"/>
</dbReference>
<dbReference type="GO" id="GO:0005886">
    <property type="term" value="C:plasma membrane"/>
    <property type="evidence" value="ECO:0007669"/>
    <property type="project" value="UniProtKB-SubCell"/>
</dbReference>
<dbReference type="GO" id="GO:0005524">
    <property type="term" value="F:ATP binding"/>
    <property type="evidence" value="ECO:0007669"/>
    <property type="project" value="UniProtKB-UniRule"/>
</dbReference>
<dbReference type="GO" id="GO:0046872">
    <property type="term" value="F:metal ion binding"/>
    <property type="evidence" value="ECO:0007669"/>
    <property type="project" value="UniProtKB-KW"/>
</dbReference>
<dbReference type="GO" id="GO:0008564">
    <property type="term" value="F:protein-exporting ATPase activity"/>
    <property type="evidence" value="ECO:0007669"/>
    <property type="project" value="UniProtKB-EC"/>
</dbReference>
<dbReference type="GO" id="GO:0065002">
    <property type="term" value="P:intracellular protein transmembrane transport"/>
    <property type="evidence" value="ECO:0007669"/>
    <property type="project" value="UniProtKB-UniRule"/>
</dbReference>
<dbReference type="GO" id="GO:0017038">
    <property type="term" value="P:protein import"/>
    <property type="evidence" value="ECO:0007669"/>
    <property type="project" value="InterPro"/>
</dbReference>
<dbReference type="GO" id="GO:0006605">
    <property type="term" value="P:protein targeting"/>
    <property type="evidence" value="ECO:0007669"/>
    <property type="project" value="UniProtKB-UniRule"/>
</dbReference>
<dbReference type="GO" id="GO:0043952">
    <property type="term" value="P:protein transport by the Sec complex"/>
    <property type="evidence" value="ECO:0007669"/>
    <property type="project" value="TreeGrafter"/>
</dbReference>
<dbReference type="CDD" id="cd17928">
    <property type="entry name" value="DEXDc_SecA"/>
    <property type="match status" value="1"/>
</dbReference>
<dbReference type="CDD" id="cd18803">
    <property type="entry name" value="SF2_C_secA"/>
    <property type="match status" value="1"/>
</dbReference>
<dbReference type="FunFam" id="1.10.3060.10:FF:000002">
    <property type="entry name" value="Preprotein translocase subunit SecA"/>
    <property type="match status" value="1"/>
</dbReference>
<dbReference type="FunFam" id="3.40.50.300:FF:000694">
    <property type="entry name" value="Preprotein translocase subunit SecA"/>
    <property type="match status" value="1"/>
</dbReference>
<dbReference type="FunFam" id="3.90.1440.10:FF:000001">
    <property type="entry name" value="Preprotein translocase subunit SecA"/>
    <property type="match status" value="1"/>
</dbReference>
<dbReference type="Gene3D" id="1.10.3060.10">
    <property type="entry name" value="Helical scaffold and wing domains of SecA"/>
    <property type="match status" value="1"/>
</dbReference>
<dbReference type="Gene3D" id="3.40.50.300">
    <property type="entry name" value="P-loop containing nucleotide triphosphate hydrolases"/>
    <property type="match status" value="3"/>
</dbReference>
<dbReference type="Gene3D" id="3.90.1440.10">
    <property type="entry name" value="SecA, preprotein cross-linking domain"/>
    <property type="match status" value="1"/>
</dbReference>
<dbReference type="HAMAP" id="MF_01382">
    <property type="entry name" value="SecA"/>
    <property type="match status" value="1"/>
</dbReference>
<dbReference type="InterPro" id="IPR014001">
    <property type="entry name" value="Helicase_ATP-bd"/>
</dbReference>
<dbReference type="InterPro" id="IPR001650">
    <property type="entry name" value="Helicase_C-like"/>
</dbReference>
<dbReference type="InterPro" id="IPR027417">
    <property type="entry name" value="P-loop_NTPase"/>
</dbReference>
<dbReference type="InterPro" id="IPR004027">
    <property type="entry name" value="SEC_C_motif"/>
</dbReference>
<dbReference type="InterPro" id="IPR000185">
    <property type="entry name" value="SecA"/>
</dbReference>
<dbReference type="InterPro" id="IPR020937">
    <property type="entry name" value="SecA_CS"/>
</dbReference>
<dbReference type="InterPro" id="IPR011115">
    <property type="entry name" value="SecA_DEAD"/>
</dbReference>
<dbReference type="InterPro" id="IPR014018">
    <property type="entry name" value="SecA_motor_DEAD"/>
</dbReference>
<dbReference type="InterPro" id="IPR011130">
    <property type="entry name" value="SecA_preprotein_X-link_dom"/>
</dbReference>
<dbReference type="InterPro" id="IPR044722">
    <property type="entry name" value="SecA_SF2_C"/>
</dbReference>
<dbReference type="InterPro" id="IPR011116">
    <property type="entry name" value="SecA_Wing/Scaffold"/>
</dbReference>
<dbReference type="InterPro" id="IPR036266">
    <property type="entry name" value="SecA_Wing/Scaffold_sf"/>
</dbReference>
<dbReference type="InterPro" id="IPR036670">
    <property type="entry name" value="SecA_X-link_sf"/>
</dbReference>
<dbReference type="NCBIfam" id="NF006630">
    <property type="entry name" value="PRK09200.1"/>
    <property type="match status" value="1"/>
</dbReference>
<dbReference type="NCBIfam" id="NF009538">
    <property type="entry name" value="PRK12904.1"/>
    <property type="match status" value="1"/>
</dbReference>
<dbReference type="NCBIfam" id="TIGR00963">
    <property type="entry name" value="secA"/>
    <property type="match status" value="1"/>
</dbReference>
<dbReference type="PANTHER" id="PTHR30612:SF0">
    <property type="entry name" value="CHLOROPLAST PROTEIN-TRANSPORTING ATPASE"/>
    <property type="match status" value="1"/>
</dbReference>
<dbReference type="PANTHER" id="PTHR30612">
    <property type="entry name" value="SECA INNER MEMBRANE COMPONENT OF SEC PROTEIN SECRETION SYSTEM"/>
    <property type="match status" value="1"/>
</dbReference>
<dbReference type="Pfam" id="PF21090">
    <property type="entry name" value="P-loop_SecA"/>
    <property type="match status" value="1"/>
</dbReference>
<dbReference type="Pfam" id="PF02810">
    <property type="entry name" value="SEC-C"/>
    <property type="match status" value="1"/>
</dbReference>
<dbReference type="Pfam" id="PF07517">
    <property type="entry name" value="SecA_DEAD"/>
    <property type="match status" value="1"/>
</dbReference>
<dbReference type="Pfam" id="PF01043">
    <property type="entry name" value="SecA_PP_bind"/>
    <property type="match status" value="1"/>
</dbReference>
<dbReference type="Pfam" id="PF07516">
    <property type="entry name" value="SecA_SW"/>
    <property type="match status" value="1"/>
</dbReference>
<dbReference type="PRINTS" id="PR00906">
    <property type="entry name" value="SECA"/>
</dbReference>
<dbReference type="SMART" id="SM00957">
    <property type="entry name" value="SecA_DEAD"/>
    <property type="match status" value="1"/>
</dbReference>
<dbReference type="SMART" id="SM00958">
    <property type="entry name" value="SecA_PP_bind"/>
    <property type="match status" value="1"/>
</dbReference>
<dbReference type="SUPFAM" id="SSF81886">
    <property type="entry name" value="Helical scaffold and wing domains of SecA"/>
    <property type="match status" value="1"/>
</dbReference>
<dbReference type="SUPFAM" id="SSF52540">
    <property type="entry name" value="P-loop containing nucleoside triphosphate hydrolases"/>
    <property type="match status" value="2"/>
</dbReference>
<dbReference type="SUPFAM" id="SSF81767">
    <property type="entry name" value="Pre-protein crosslinking domain of SecA"/>
    <property type="match status" value="1"/>
</dbReference>
<dbReference type="PROSITE" id="PS01312">
    <property type="entry name" value="SECA"/>
    <property type="match status" value="1"/>
</dbReference>
<dbReference type="PROSITE" id="PS51196">
    <property type="entry name" value="SECA_MOTOR_DEAD"/>
    <property type="match status" value="1"/>
</dbReference>
<accession>A7FQJ3</accession>
<protein>
    <recommendedName>
        <fullName evidence="1">Protein translocase subunit SecA</fullName>
        <ecNumber evidence="1">7.4.2.8</ecNumber>
    </recommendedName>
</protein>
<organism>
    <name type="scientific">Clostridium botulinum (strain ATCC 19397 / Type A)</name>
    <dbReference type="NCBI Taxonomy" id="441770"/>
    <lineage>
        <taxon>Bacteria</taxon>
        <taxon>Bacillati</taxon>
        <taxon>Bacillota</taxon>
        <taxon>Clostridia</taxon>
        <taxon>Eubacteriales</taxon>
        <taxon>Clostridiaceae</taxon>
        <taxon>Clostridium</taxon>
    </lineage>
</organism>